<comment type="similarity">
    <text evidence="1">Belongs to the bacterial ribosomal protein bS16 family.</text>
</comment>
<sequence>MVRIRLQRMGSKFNPFYKIVVADARAPRDGRFIEALGYYNPQQKFAKVNLEKTYRWLHIGAQVTQTVRNIFSKKGVFKNFLEQKSSRA</sequence>
<proteinExistence type="inferred from homology"/>
<protein>
    <recommendedName>
        <fullName evidence="1">Small ribosomal subunit protein bS16</fullName>
    </recommendedName>
    <alternativeName>
        <fullName evidence="2">30S ribosomal protein S16</fullName>
    </alternativeName>
</protein>
<gene>
    <name evidence="1" type="primary">rpsP</name>
    <name type="ordered locus">mhp094</name>
</gene>
<evidence type="ECO:0000255" key="1">
    <source>
        <dbReference type="HAMAP-Rule" id="MF_00385"/>
    </source>
</evidence>
<evidence type="ECO:0000305" key="2"/>
<feature type="chain" id="PRO_0000243828" description="Small ribosomal subunit protein bS16">
    <location>
        <begin position="1"/>
        <end position="88"/>
    </location>
</feature>
<reference key="1">
    <citation type="journal article" date="2004" name="J. Bacteriol.">
        <title>The genome sequence of Mycoplasma hyopneumoniae strain 232, the agent of swine mycoplasmosis.</title>
        <authorList>
            <person name="Minion F.C."/>
            <person name="Lefkowitz E.J."/>
            <person name="Madsen M.L."/>
            <person name="Cleary B.J."/>
            <person name="Swartzell S.M."/>
            <person name="Mahairas G.G."/>
        </authorList>
    </citation>
    <scope>NUCLEOTIDE SEQUENCE [LARGE SCALE GENOMIC DNA]</scope>
    <source>
        <strain>232</strain>
    </source>
</reference>
<dbReference type="EMBL" id="AE017332">
    <property type="protein sequence ID" value="AAV27409.1"/>
    <property type="molecule type" value="Genomic_DNA"/>
</dbReference>
<dbReference type="RefSeq" id="WP_011205932.1">
    <property type="nucleotide sequence ID" value="NC_006360.1"/>
</dbReference>
<dbReference type="SMR" id="Q601V7"/>
<dbReference type="GeneID" id="41334589"/>
<dbReference type="KEGG" id="mhy:mhp094"/>
<dbReference type="eggNOG" id="COG0228">
    <property type="taxonomic scope" value="Bacteria"/>
</dbReference>
<dbReference type="HOGENOM" id="CLU_100590_5_0_14"/>
<dbReference type="PhylomeDB" id="Q601V7"/>
<dbReference type="Proteomes" id="UP000006822">
    <property type="component" value="Chromosome"/>
</dbReference>
<dbReference type="GO" id="GO:0005737">
    <property type="term" value="C:cytoplasm"/>
    <property type="evidence" value="ECO:0007669"/>
    <property type="project" value="UniProtKB-ARBA"/>
</dbReference>
<dbReference type="GO" id="GO:0015935">
    <property type="term" value="C:small ribosomal subunit"/>
    <property type="evidence" value="ECO:0007669"/>
    <property type="project" value="TreeGrafter"/>
</dbReference>
<dbReference type="GO" id="GO:0003735">
    <property type="term" value="F:structural constituent of ribosome"/>
    <property type="evidence" value="ECO:0007669"/>
    <property type="project" value="InterPro"/>
</dbReference>
<dbReference type="GO" id="GO:0006412">
    <property type="term" value="P:translation"/>
    <property type="evidence" value="ECO:0007669"/>
    <property type="project" value="UniProtKB-UniRule"/>
</dbReference>
<dbReference type="Gene3D" id="3.30.1320.10">
    <property type="match status" value="1"/>
</dbReference>
<dbReference type="HAMAP" id="MF_00385">
    <property type="entry name" value="Ribosomal_bS16"/>
    <property type="match status" value="1"/>
</dbReference>
<dbReference type="InterPro" id="IPR000307">
    <property type="entry name" value="Ribosomal_bS16"/>
</dbReference>
<dbReference type="InterPro" id="IPR023803">
    <property type="entry name" value="Ribosomal_bS16_dom_sf"/>
</dbReference>
<dbReference type="NCBIfam" id="TIGR00002">
    <property type="entry name" value="S16"/>
    <property type="match status" value="1"/>
</dbReference>
<dbReference type="PANTHER" id="PTHR12919">
    <property type="entry name" value="30S RIBOSOMAL PROTEIN S16"/>
    <property type="match status" value="1"/>
</dbReference>
<dbReference type="PANTHER" id="PTHR12919:SF20">
    <property type="entry name" value="SMALL RIBOSOMAL SUBUNIT PROTEIN BS16M"/>
    <property type="match status" value="1"/>
</dbReference>
<dbReference type="Pfam" id="PF00886">
    <property type="entry name" value="Ribosomal_S16"/>
    <property type="match status" value="1"/>
</dbReference>
<dbReference type="SUPFAM" id="SSF54565">
    <property type="entry name" value="Ribosomal protein S16"/>
    <property type="match status" value="1"/>
</dbReference>
<name>RS16_MESH2</name>
<accession>Q601V7</accession>
<organism>
    <name type="scientific">Mesomycoplasma hyopneumoniae (strain 232)</name>
    <name type="common">Mycoplasma hyopneumoniae</name>
    <dbReference type="NCBI Taxonomy" id="295358"/>
    <lineage>
        <taxon>Bacteria</taxon>
        <taxon>Bacillati</taxon>
        <taxon>Mycoplasmatota</taxon>
        <taxon>Mycoplasmoidales</taxon>
        <taxon>Metamycoplasmataceae</taxon>
        <taxon>Mesomycoplasma</taxon>
    </lineage>
</organism>
<keyword id="KW-0687">Ribonucleoprotein</keyword>
<keyword id="KW-0689">Ribosomal protein</keyword>